<name>PTPRF_RAT</name>
<organism>
    <name type="scientific">Rattus norvegicus</name>
    <name type="common">Rat</name>
    <dbReference type="NCBI Taxonomy" id="10116"/>
    <lineage>
        <taxon>Eukaryota</taxon>
        <taxon>Metazoa</taxon>
        <taxon>Chordata</taxon>
        <taxon>Craniata</taxon>
        <taxon>Vertebrata</taxon>
        <taxon>Euteleostomi</taxon>
        <taxon>Mammalia</taxon>
        <taxon>Eutheria</taxon>
        <taxon>Euarchontoglires</taxon>
        <taxon>Glires</taxon>
        <taxon>Rodentia</taxon>
        <taxon>Myomorpha</taxon>
        <taxon>Muroidea</taxon>
        <taxon>Muridae</taxon>
        <taxon>Murinae</taxon>
        <taxon>Rattus</taxon>
    </lineage>
</organism>
<keyword id="KW-0130">Cell adhesion</keyword>
<keyword id="KW-1015">Disulfide bond</keyword>
<keyword id="KW-0325">Glycoprotein</keyword>
<keyword id="KW-0358">Heparin-binding</keyword>
<keyword id="KW-0378">Hydrolase</keyword>
<keyword id="KW-0393">Immunoglobulin domain</keyword>
<keyword id="KW-0472">Membrane</keyword>
<keyword id="KW-0597">Phosphoprotein</keyword>
<keyword id="KW-0904">Protein phosphatase</keyword>
<keyword id="KW-0675">Receptor</keyword>
<keyword id="KW-1185">Reference proteome</keyword>
<keyword id="KW-0677">Repeat</keyword>
<keyword id="KW-0732">Signal</keyword>
<keyword id="KW-0812">Transmembrane</keyword>
<keyword id="KW-1133">Transmembrane helix</keyword>
<accession>Q64604</accession>
<accession>Q4JFJ1</accession>
<accession>Q63294</accession>
<accession>Q63295</accession>
<accession>Q63296</accession>
<feature type="signal peptide" evidence="3">
    <location>
        <begin position="1"/>
        <end position="29"/>
    </location>
</feature>
<feature type="chain" id="PRO_5000142152" description="Receptor-type tyrosine-protein phosphatase F">
    <location>
        <begin position="30"/>
        <end position="1898"/>
    </location>
</feature>
<feature type="topological domain" description="Extracellular" evidence="3">
    <location>
        <begin position="30"/>
        <end position="1254"/>
    </location>
</feature>
<feature type="transmembrane region" description="Helical" evidence="3">
    <location>
        <begin position="1255"/>
        <end position="1275"/>
    </location>
</feature>
<feature type="topological domain" description="Cytoplasmic" evidence="3">
    <location>
        <begin position="1276"/>
        <end position="1898"/>
    </location>
</feature>
<feature type="domain" description="Ig-like C2-type 1">
    <location>
        <begin position="33"/>
        <end position="123"/>
    </location>
</feature>
<feature type="domain" description="Ig-like C2-type 2">
    <location>
        <begin position="135"/>
        <end position="224"/>
    </location>
</feature>
<feature type="domain" description="Ig-like C2-type 3">
    <location>
        <begin position="232"/>
        <end position="314"/>
    </location>
</feature>
<feature type="domain" description="Fibronectin type-III 1" evidence="6">
    <location>
        <begin position="321"/>
        <end position="411"/>
    </location>
</feature>
<feature type="domain" description="Fibronectin type-III 2" evidence="6">
    <location>
        <begin position="416"/>
        <end position="510"/>
    </location>
</feature>
<feature type="domain" description="Fibronectin type-III 3" evidence="6">
    <location>
        <begin position="514"/>
        <end position="604"/>
    </location>
</feature>
<feature type="domain" description="Fibronectin type-III 4" evidence="6">
    <location>
        <begin position="609"/>
        <end position="706"/>
    </location>
</feature>
<feature type="domain" description="Fibronectin type-III 5" evidence="6">
    <location>
        <begin position="711"/>
        <end position="810"/>
    </location>
</feature>
<feature type="domain" description="Fibronectin type-III 6" evidence="6">
    <location>
        <begin position="811"/>
        <end position="905"/>
    </location>
</feature>
<feature type="domain" description="Fibronectin type-III 7" evidence="6">
    <location>
        <begin position="909"/>
        <end position="1001"/>
    </location>
</feature>
<feature type="domain" description="Fibronectin type-III 8" evidence="6">
    <location>
        <begin position="1005"/>
        <end position="1089"/>
    </location>
</feature>
<feature type="domain" description="Tyrosine-protein phosphatase 1" evidence="5">
    <location>
        <begin position="1343"/>
        <end position="1598"/>
    </location>
</feature>
<feature type="domain" description="Tyrosine-protein phosphatase 2" evidence="5">
    <location>
        <begin position="1630"/>
        <end position="1889"/>
    </location>
</feature>
<feature type="region of interest" description="Disordered" evidence="8">
    <location>
        <begin position="693"/>
        <end position="713"/>
    </location>
</feature>
<feature type="active site" description="Phosphocysteine intermediate" evidence="1">
    <location>
        <position position="1539"/>
    </location>
</feature>
<feature type="active site" description="Phosphocysteine intermediate" evidence="1">
    <location>
        <position position="1830"/>
    </location>
</feature>
<feature type="binding site" evidence="1">
    <location>
        <begin position="68"/>
        <end position="77"/>
    </location>
    <ligand>
        <name>heparin</name>
        <dbReference type="ChEBI" id="CHEBI:28304"/>
    </ligand>
</feature>
<feature type="binding site" evidence="1">
    <location>
        <position position="1507"/>
    </location>
    <ligand>
        <name>substrate</name>
    </ligand>
</feature>
<feature type="binding site" evidence="1">
    <location>
        <begin position="1539"/>
        <end position="1545"/>
    </location>
    <ligand>
        <name>substrate</name>
    </ligand>
</feature>
<feature type="binding site" evidence="1">
    <location>
        <position position="1583"/>
    </location>
    <ligand>
        <name>substrate</name>
    </ligand>
</feature>
<feature type="modified residue" description="Phosphoserine" evidence="2">
    <location>
        <position position="1296"/>
    </location>
</feature>
<feature type="glycosylation site" description="N-linked (GlcNAc...) asparagine" evidence="3">
    <location>
        <position position="117"/>
    </location>
</feature>
<feature type="glycosylation site" description="N-linked (GlcNAc...) asparagine" evidence="3">
    <location>
        <position position="250"/>
    </location>
</feature>
<feature type="glycosylation site" description="N-linked (GlcNAc...) asparagine" evidence="3">
    <location>
        <position position="295"/>
    </location>
</feature>
<feature type="glycosylation site" description="N-linked (GlcNAc...) asparagine" evidence="3">
    <location>
        <position position="721"/>
    </location>
</feature>
<feature type="glycosylation site" description="N-linked (GlcNAc...) asparagine" evidence="3">
    <location>
        <position position="941"/>
    </location>
</feature>
<feature type="glycosylation site" description="N-linked (GlcNAc...) asparagine" evidence="3">
    <location>
        <position position="957"/>
    </location>
</feature>
<feature type="disulfide bond" evidence="4">
    <location>
        <begin position="54"/>
        <end position="107"/>
    </location>
</feature>
<feature type="disulfide bond" evidence="4">
    <location>
        <begin position="156"/>
        <end position="207"/>
    </location>
</feature>
<feature type="disulfide bond" evidence="4">
    <location>
        <begin position="253"/>
        <end position="298"/>
    </location>
</feature>
<feature type="sequence conflict" description="In Ref. 2; AAA41510." evidence="10" ref="2">
    <original>T</original>
    <variation>S</variation>
    <location>
        <position position="1073"/>
    </location>
</feature>
<feature type="sequence conflict" description="In Ref. 2; AAA41510." evidence="10" ref="2">
    <original>I</original>
    <variation>T</variation>
    <location>
        <position position="1434"/>
    </location>
</feature>
<feature type="sequence conflict" description="In Ref. 2; AAA41510." evidence="10" ref="2">
    <original>G</original>
    <variation>N</variation>
    <location>
        <position position="1639"/>
    </location>
</feature>
<feature type="sequence conflict" description="In Ref. 2; AAA41510." evidence="10" ref="2">
    <original>RA</original>
    <variation>HT</variation>
    <location>
        <begin position="1643"/>
        <end position="1644"/>
    </location>
</feature>
<dbReference type="EC" id="3.1.3.48"/>
<dbReference type="EMBL" id="L11586">
    <property type="protein sequence ID" value="AAC37655.1"/>
    <property type="molecule type" value="mRNA"/>
</dbReference>
<dbReference type="EMBL" id="M60103">
    <property type="protein sequence ID" value="AAA41510.1"/>
    <property type="molecule type" value="mRNA"/>
</dbReference>
<dbReference type="PIR" id="S46216">
    <property type="entry name" value="S46216"/>
</dbReference>
<dbReference type="RefSeq" id="NP_062122.1">
    <property type="nucleotide sequence ID" value="NM_019249.1"/>
</dbReference>
<dbReference type="SMR" id="Q64604"/>
<dbReference type="BioGRID" id="261938">
    <property type="interactions" value="3"/>
</dbReference>
<dbReference type="CORUM" id="Q64604"/>
<dbReference type="FunCoup" id="Q64604">
    <property type="interactions" value="1527"/>
</dbReference>
<dbReference type="IntAct" id="Q64604">
    <property type="interactions" value="4"/>
</dbReference>
<dbReference type="MINT" id="Q64604"/>
<dbReference type="STRING" id="10116.ENSRNOP00000068583"/>
<dbReference type="BindingDB" id="Q64604"/>
<dbReference type="ChEMBL" id="CHEMBL2834"/>
<dbReference type="GlyCosmos" id="Q64604">
    <property type="glycosylation" value="6 sites, No reported glycans"/>
</dbReference>
<dbReference type="GlyGen" id="Q64604">
    <property type="glycosylation" value="8 sites"/>
</dbReference>
<dbReference type="iPTMnet" id="Q64604"/>
<dbReference type="PhosphoSitePlus" id="Q64604"/>
<dbReference type="jPOST" id="Q64604"/>
<dbReference type="PaxDb" id="10116-ENSRNOP00000027271"/>
<dbReference type="ABCD" id="Q64604">
    <property type="antibodies" value="2 sequenced antibodies"/>
</dbReference>
<dbReference type="GeneID" id="360406"/>
<dbReference type="KEGG" id="rno:360406"/>
<dbReference type="UCSC" id="RGD:3453">
    <property type="organism name" value="rat"/>
</dbReference>
<dbReference type="AGR" id="RGD:3453"/>
<dbReference type="CTD" id="5792"/>
<dbReference type="RGD" id="3453">
    <property type="gene designation" value="Ptprf"/>
</dbReference>
<dbReference type="eggNOG" id="KOG4228">
    <property type="taxonomic scope" value="Eukaryota"/>
</dbReference>
<dbReference type="InParanoid" id="Q64604"/>
<dbReference type="PhylomeDB" id="Q64604"/>
<dbReference type="BRENDA" id="3.1.3.48">
    <property type="organism ID" value="5301"/>
</dbReference>
<dbReference type="Reactome" id="R-RNO-388844">
    <property type="pathway name" value="Receptor-type tyrosine-protein phosphatases"/>
</dbReference>
<dbReference type="Reactome" id="R-RNO-77387">
    <property type="pathway name" value="Insulin receptor recycling"/>
</dbReference>
<dbReference type="Reactome" id="R-RNO-8849932">
    <property type="pathway name" value="Synaptic adhesion-like molecules"/>
</dbReference>
<dbReference type="PRO" id="PR:Q64604"/>
<dbReference type="Proteomes" id="UP000002494">
    <property type="component" value="Unplaced"/>
</dbReference>
<dbReference type="GO" id="GO:0005768">
    <property type="term" value="C:endosome"/>
    <property type="evidence" value="ECO:0000314"/>
    <property type="project" value="RGD"/>
</dbReference>
<dbReference type="GO" id="GO:0060076">
    <property type="term" value="C:excitatory synapse"/>
    <property type="evidence" value="ECO:0000314"/>
    <property type="project" value="RGD"/>
</dbReference>
<dbReference type="GO" id="GO:0030426">
    <property type="term" value="C:growth cone"/>
    <property type="evidence" value="ECO:0000314"/>
    <property type="project" value="RGD"/>
</dbReference>
<dbReference type="GO" id="GO:0043005">
    <property type="term" value="C:neuron projection"/>
    <property type="evidence" value="ECO:0000266"/>
    <property type="project" value="RGD"/>
</dbReference>
<dbReference type="GO" id="GO:0043025">
    <property type="term" value="C:neuronal cell body"/>
    <property type="evidence" value="ECO:0000314"/>
    <property type="project" value="RGD"/>
</dbReference>
<dbReference type="GO" id="GO:0098839">
    <property type="term" value="C:postsynaptic density membrane"/>
    <property type="evidence" value="ECO:0000314"/>
    <property type="project" value="SynGO"/>
</dbReference>
<dbReference type="GO" id="GO:0050839">
    <property type="term" value="F:cell adhesion molecule binding"/>
    <property type="evidence" value="ECO:0000266"/>
    <property type="project" value="RGD"/>
</dbReference>
<dbReference type="GO" id="GO:0035373">
    <property type="term" value="F:chondroitin sulfate proteoglycan binding"/>
    <property type="evidence" value="ECO:0000266"/>
    <property type="project" value="RGD"/>
</dbReference>
<dbReference type="GO" id="GO:0008201">
    <property type="term" value="F:heparin binding"/>
    <property type="evidence" value="ECO:0007669"/>
    <property type="project" value="UniProtKB-KW"/>
</dbReference>
<dbReference type="GO" id="GO:0005158">
    <property type="term" value="F:insulin receptor binding"/>
    <property type="evidence" value="ECO:0000314"/>
    <property type="project" value="RGD"/>
</dbReference>
<dbReference type="GO" id="GO:0042301">
    <property type="term" value="F:phosphate ion binding"/>
    <property type="evidence" value="ECO:0000314"/>
    <property type="project" value="RGD"/>
</dbReference>
<dbReference type="GO" id="GO:0004721">
    <property type="term" value="F:phosphoprotein phosphatase activity"/>
    <property type="evidence" value="ECO:0000266"/>
    <property type="project" value="RGD"/>
</dbReference>
<dbReference type="GO" id="GO:0004725">
    <property type="term" value="F:protein tyrosine phosphatase activity"/>
    <property type="evidence" value="ECO:0000314"/>
    <property type="project" value="RGD"/>
</dbReference>
<dbReference type="GO" id="GO:0044877">
    <property type="term" value="F:protein-containing complex binding"/>
    <property type="evidence" value="ECO:0000266"/>
    <property type="project" value="RGD"/>
</dbReference>
<dbReference type="GO" id="GO:0030971">
    <property type="term" value="F:receptor tyrosine kinase binding"/>
    <property type="evidence" value="ECO:0000353"/>
    <property type="project" value="RGD"/>
</dbReference>
<dbReference type="GO" id="GO:0005001">
    <property type="term" value="F:transmembrane receptor protein tyrosine phosphatase activity"/>
    <property type="evidence" value="ECO:0000314"/>
    <property type="project" value="RGD"/>
</dbReference>
<dbReference type="GO" id="GO:0016477">
    <property type="term" value="P:cell migration"/>
    <property type="evidence" value="ECO:0000250"/>
    <property type="project" value="UniProtKB"/>
</dbReference>
<dbReference type="GO" id="GO:0007156">
    <property type="term" value="P:homophilic cell adhesion via plasma membrane adhesion molecules"/>
    <property type="evidence" value="ECO:0000314"/>
    <property type="project" value="RGD"/>
</dbReference>
<dbReference type="GO" id="GO:0008285">
    <property type="term" value="P:negative regulation of cell population proliferation"/>
    <property type="evidence" value="ECO:0000315"/>
    <property type="project" value="RGD"/>
</dbReference>
<dbReference type="GO" id="GO:0031345">
    <property type="term" value="P:negative regulation of cell projection organization"/>
    <property type="evidence" value="ECO:0000315"/>
    <property type="project" value="RGD"/>
</dbReference>
<dbReference type="GO" id="GO:0001960">
    <property type="term" value="P:negative regulation of cytokine-mediated signaling pathway"/>
    <property type="evidence" value="ECO:0000315"/>
    <property type="project" value="RGD"/>
</dbReference>
<dbReference type="GO" id="GO:0042059">
    <property type="term" value="P:negative regulation of epidermal growth factor receptor signaling pathway"/>
    <property type="evidence" value="ECO:0000315"/>
    <property type="project" value="RGD"/>
</dbReference>
<dbReference type="GO" id="GO:0046627">
    <property type="term" value="P:negative regulation of insulin receptor signaling pathway"/>
    <property type="evidence" value="ECO:0000315"/>
    <property type="project" value="RGD"/>
</dbReference>
<dbReference type="GO" id="GO:0051387">
    <property type="term" value="P:negative regulation of neurotrophin TRK receptor signaling pathway"/>
    <property type="evidence" value="ECO:0000315"/>
    <property type="project" value="RGD"/>
</dbReference>
<dbReference type="GO" id="GO:1900121">
    <property type="term" value="P:negative regulation of receptor binding"/>
    <property type="evidence" value="ECO:0000250"/>
    <property type="project" value="UniProtKB"/>
</dbReference>
<dbReference type="GO" id="GO:0007399">
    <property type="term" value="P:nervous system development"/>
    <property type="evidence" value="ECO:0000314"/>
    <property type="project" value="RGD"/>
</dbReference>
<dbReference type="GO" id="GO:0031102">
    <property type="term" value="P:neuron projection regeneration"/>
    <property type="evidence" value="ECO:0000266"/>
    <property type="project" value="RGD"/>
</dbReference>
<dbReference type="GO" id="GO:0043065">
    <property type="term" value="P:positive regulation of apoptotic process"/>
    <property type="evidence" value="ECO:0000314"/>
    <property type="project" value="RGD"/>
</dbReference>
<dbReference type="GO" id="GO:0050775">
    <property type="term" value="P:positive regulation of dendrite morphogenesis"/>
    <property type="evidence" value="ECO:0000315"/>
    <property type="project" value="RGD"/>
</dbReference>
<dbReference type="GO" id="GO:0043525">
    <property type="term" value="P:positive regulation of neuron apoptotic process"/>
    <property type="evidence" value="ECO:0000315"/>
    <property type="project" value="RGD"/>
</dbReference>
<dbReference type="GO" id="GO:0048679">
    <property type="term" value="P:regulation of axon regeneration"/>
    <property type="evidence" value="ECO:0000266"/>
    <property type="project" value="RGD"/>
</dbReference>
<dbReference type="GO" id="GO:0010975">
    <property type="term" value="P:regulation of neuron projection development"/>
    <property type="evidence" value="ECO:0000266"/>
    <property type="project" value="RGD"/>
</dbReference>
<dbReference type="GO" id="GO:0099175">
    <property type="term" value="P:regulation of postsynapse organization"/>
    <property type="evidence" value="ECO:0000314"/>
    <property type="project" value="SynGO"/>
</dbReference>
<dbReference type="GO" id="GO:0050803">
    <property type="term" value="P:regulation of synapse structure or activity"/>
    <property type="evidence" value="ECO:0000315"/>
    <property type="project" value="RGD"/>
</dbReference>
<dbReference type="GO" id="GO:0007165">
    <property type="term" value="P:signal transduction"/>
    <property type="evidence" value="ECO:0000318"/>
    <property type="project" value="GO_Central"/>
</dbReference>
<dbReference type="GO" id="GO:0099560">
    <property type="term" value="P:synaptic membrane adhesion"/>
    <property type="evidence" value="ECO:0000314"/>
    <property type="project" value="SynGO"/>
</dbReference>
<dbReference type="CDD" id="cd00063">
    <property type="entry name" value="FN3"/>
    <property type="match status" value="8"/>
</dbReference>
<dbReference type="CDD" id="cd05738">
    <property type="entry name" value="IgI_2_RPTP_IIa_LAR_like"/>
    <property type="match status" value="1"/>
</dbReference>
<dbReference type="CDD" id="cd05739">
    <property type="entry name" value="IgI_3_RPTP_IIa_LAR_like"/>
    <property type="match status" value="1"/>
</dbReference>
<dbReference type="CDD" id="cd14629">
    <property type="entry name" value="R-PTP-F-2"/>
    <property type="match status" value="1"/>
</dbReference>
<dbReference type="FunFam" id="2.60.40.10:FF:000010">
    <property type="entry name" value="receptor-type tyrosine-protein phosphatase delta isoform X1"/>
    <property type="match status" value="1"/>
</dbReference>
<dbReference type="FunFam" id="2.60.40.10:FF:000027">
    <property type="entry name" value="receptor-type tyrosine-protein phosphatase delta isoform X1"/>
    <property type="match status" value="1"/>
</dbReference>
<dbReference type="FunFam" id="2.60.40.10:FF:000036">
    <property type="entry name" value="receptor-type tyrosine-protein phosphatase delta isoform X1"/>
    <property type="match status" value="1"/>
</dbReference>
<dbReference type="FunFam" id="2.60.40.10:FF:000066">
    <property type="entry name" value="receptor-type tyrosine-protein phosphatase delta isoform X1"/>
    <property type="match status" value="1"/>
</dbReference>
<dbReference type="FunFam" id="2.60.40.10:FF:000144">
    <property type="entry name" value="receptor-type tyrosine-protein phosphatase delta isoform X1"/>
    <property type="match status" value="1"/>
</dbReference>
<dbReference type="FunFam" id="2.60.40.10:FF:000015">
    <property type="entry name" value="receptor-type tyrosine-protein phosphatase delta isoform X2"/>
    <property type="match status" value="1"/>
</dbReference>
<dbReference type="FunFam" id="2.60.40.10:FF:000023">
    <property type="entry name" value="receptor-type tyrosine-protein phosphatase delta isoform X2"/>
    <property type="match status" value="1"/>
</dbReference>
<dbReference type="FunFam" id="2.60.40.10:FF:000082">
    <property type="entry name" value="receptor-type tyrosine-protein phosphatase delta isoform X2"/>
    <property type="match status" value="1"/>
</dbReference>
<dbReference type="FunFam" id="2.60.40.10:FF:000128">
    <property type="entry name" value="receptor-type tyrosine-protein phosphatase delta isoform X2"/>
    <property type="match status" value="1"/>
</dbReference>
<dbReference type="FunFam" id="3.90.190.10:FF:000002">
    <property type="entry name" value="receptor-type tyrosine-protein phosphatase delta isoform X2"/>
    <property type="match status" value="1"/>
</dbReference>
<dbReference type="FunFam" id="3.90.190.10:FF:000001">
    <property type="entry name" value="Receptor-type tyrosine-protein phosphatase F isoform A"/>
    <property type="match status" value="1"/>
</dbReference>
<dbReference type="FunFam" id="2.60.40.10:FF:000098">
    <property type="entry name" value="receptor-type tyrosine-protein phosphatase F isoform X1"/>
    <property type="match status" value="1"/>
</dbReference>
<dbReference type="FunFam" id="2.60.40.10:FF:000353">
    <property type="entry name" value="receptor-type tyrosine-protein phosphatase F isoform X1"/>
    <property type="match status" value="1"/>
</dbReference>
<dbReference type="Gene3D" id="2.60.40.10">
    <property type="entry name" value="Immunoglobulins"/>
    <property type="match status" value="11"/>
</dbReference>
<dbReference type="Gene3D" id="3.90.190.10">
    <property type="entry name" value="Protein tyrosine phosphatase superfamily"/>
    <property type="match status" value="2"/>
</dbReference>
<dbReference type="InterPro" id="IPR003961">
    <property type="entry name" value="FN3_dom"/>
</dbReference>
<dbReference type="InterPro" id="IPR036116">
    <property type="entry name" value="FN3_sf"/>
</dbReference>
<dbReference type="InterPro" id="IPR007110">
    <property type="entry name" value="Ig-like_dom"/>
</dbReference>
<dbReference type="InterPro" id="IPR036179">
    <property type="entry name" value="Ig-like_dom_sf"/>
</dbReference>
<dbReference type="InterPro" id="IPR013783">
    <property type="entry name" value="Ig-like_fold"/>
</dbReference>
<dbReference type="InterPro" id="IPR013098">
    <property type="entry name" value="Ig_I-set"/>
</dbReference>
<dbReference type="InterPro" id="IPR003599">
    <property type="entry name" value="Ig_sub"/>
</dbReference>
<dbReference type="InterPro" id="IPR003598">
    <property type="entry name" value="Ig_sub2"/>
</dbReference>
<dbReference type="InterPro" id="IPR029021">
    <property type="entry name" value="Prot-tyrosine_phosphatase-like"/>
</dbReference>
<dbReference type="InterPro" id="IPR000242">
    <property type="entry name" value="PTP_cat"/>
</dbReference>
<dbReference type="InterPro" id="IPR050713">
    <property type="entry name" value="RTP_Phos/Ushers"/>
</dbReference>
<dbReference type="InterPro" id="IPR016130">
    <property type="entry name" value="Tyr_Pase_AS"/>
</dbReference>
<dbReference type="InterPro" id="IPR003595">
    <property type="entry name" value="Tyr_Pase_cat"/>
</dbReference>
<dbReference type="InterPro" id="IPR000387">
    <property type="entry name" value="Tyr_Pase_dom"/>
</dbReference>
<dbReference type="PANTHER" id="PTHR46957">
    <property type="entry name" value="CYTOKINE RECEPTOR"/>
    <property type="match status" value="1"/>
</dbReference>
<dbReference type="PANTHER" id="PTHR46957:SF9">
    <property type="entry name" value="PROTEIN-TYROSINE-PHOSPHATASE"/>
    <property type="match status" value="1"/>
</dbReference>
<dbReference type="Pfam" id="PF00041">
    <property type="entry name" value="fn3"/>
    <property type="match status" value="7"/>
</dbReference>
<dbReference type="Pfam" id="PF07679">
    <property type="entry name" value="I-set"/>
    <property type="match status" value="3"/>
</dbReference>
<dbReference type="Pfam" id="PF00102">
    <property type="entry name" value="Y_phosphatase"/>
    <property type="match status" value="2"/>
</dbReference>
<dbReference type="PRINTS" id="PR00014">
    <property type="entry name" value="FNTYPEIII"/>
</dbReference>
<dbReference type="PRINTS" id="PR00700">
    <property type="entry name" value="PRTYPHPHTASE"/>
</dbReference>
<dbReference type="SMART" id="SM00060">
    <property type="entry name" value="FN3"/>
    <property type="match status" value="8"/>
</dbReference>
<dbReference type="SMART" id="SM00409">
    <property type="entry name" value="IG"/>
    <property type="match status" value="3"/>
</dbReference>
<dbReference type="SMART" id="SM00408">
    <property type="entry name" value="IGc2"/>
    <property type="match status" value="3"/>
</dbReference>
<dbReference type="SMART" id="SM00194">
    <property type="entry name" value="PTPc"/>
    <property type="match status" value="2"/>
</dbReference>
<dbReference type="SMART" id="SM00404">
    <property type="entry name" value="PTPc_motif"/>
    <property type="match status" value="2"/>
</dbReference>
<dbReference type="SUPFAM" id="SSF52799">
    <property type="entry name" value="(Phosphotyrosine protein) phosphatases II"/>
    <property type="match status" value="2"/>
</dbReference>
<dbReference type="SUPFAM" id="SSF49265">
    <property type="entry name" value="Fibronectin type III"/>
    <property type="match status" value="5"/>
</dbReference>
<dbReference type="SUPFAM" id="SSF48726">
    <property type="entry name" value="Immunoglobulin"/>
    <property type="match status" value="3"/>
</dbReference>
<dbReference type="PROSITE" id="PS50853">
    <property type="entry name" value="FN3"/>
    <property type="match status" value="8"/>
</dbReference>
<dbReference type="PROSITE" id="PS50835">
    <property type="entry name" value="IG_LIKE"/>
    <property type="match status" value="3"/>
</dbReference>
<dbReference type="PROSITE" id="PS00383">
    <property type="entry name" value="TYR_PHOSPHATASE_1"/>
    <property type="match status" value="2"/>
</dbReference>
<dbReference type="PROSITE" id="PS50056">
    <property type="entry name" value="TYR_PHOSPHATASE_2"/>
    <property type="match status" value="2"/>
</dbReference>
<dbReference type="PROSITE" id="PS50055">
    <property type="entry name" value="TYR_PHOSPHATASE_PTP"/>
    <property type="match status" value="2"/>
</dbReference>
<gene>
    <name type="primary">Ptprf</name>
    <name type="synonym">Lar</name>
</gene>
<sequence length="1898" mass="211494">MAPEPAPGRRMVPLVPALVMLGLMAGAHGDSKPVFVKVPEDQIGLSGGVASFVCQATGEPKPRITWMKKGKKVSSQRFEVIEFDDGAGSVLRIQPLRVQRDEAIYECTATNSLGEINTSAKLSVLEEDQLPSGFPTIDMGPQLKVVEKARTATMLCAAGGNPDPEISWFKDFLPVDPASSNGRIKQLRSGALQIESSEESDQGKYECVATNSAGTRYSAPANLYVRVRRVAPRFSIPPSSQEVMPGGNVNLTCVAVGAPMPYVKWMMGAEELTKEDEMPVGRNVLELSNVMRSANYTCVAISSLGMIEATAQVTVKALPKPPIDLVVTETTATSVTLTWDSGNTEPVSFYGIQYRAAGTDGPFQEVDGVASTRYSIGGLSPFSEYAFRVLAVNSIGRGPPSEAVRARTGEQAPSSPPRRVQARMLSASTMLVQWEPPEEPNGLVRGYRVYYTPDSRRPLSAWHKHNTDAGLLTTVGSLLPGITYSLRVLAFTAVGDGPPSPTIQVKTQQGVPAQPADFQAKAESDTRIQLSWLLPPQERIIKYELVYWAAEDEGQQHKVTFDPTSSYTLEDLKPDTLYHFQLAARSDLGVGVFTPTVEACTAQSTPSAPPQKVTCVSTGSTTVRVSWVPPPADSRNGIITQYSVAYEAVDGEDRKRHVVDGISREHSSWDLLGLEKWTEYRVWVRAHTDVGPGPESSPVLVRTDEDVPSGPPRKVEVEPLNSTAVHVSWKLPVPNKQHGQIRGYQVTYVRLENGEPRGQPIIQDVMLAEAQETTISGLTPETTYSITVAAYTTKGDGARSKPKVVTTTGAVPGRPTMMVSTTAMHTALLQWHPPKELPGELLGYRLQYRRADEARPNTIDFGKDDQHFTVTGLHKGATYIFRLAAKNRAGPGEEFEKEITTPEDAPSGFPQNLRVTGLTTSTTELAWDPPVLAERNGRITNYTVVYRDINSQHELQNVTGDVHLTLLGLKPDTTYDIKVRAHTSKGAGPLSPSIQSRTMPMEQVFAKNFRVAAAMKTSVLLSWEVPDSYKSAVPFKILYNGQSVEVDGHSMRKLIADLQPNTEYSFVLMNRGTSAGGLQHLVSIRTAPDLLPQKPLPASAFIEDGRFSLSMPQVQDPSLVRWFYIVVVPIDRVGGNLLAPRWSTPEELELDELLEAIEQGEEKQRRRRRQAERLKPYVAAQVDELPETFTLGDKKNYRGFYNRPLSPDLSYQCFVLASLKEPMDQKRYASSPYSDEIVVQVTPAQQQEEPEMLWVTGPVLAVILIILIVIAILLFKRKRTHSPSSKDEQSIGLKDSLLAHSSDPVEMRRLNYQTPGMRDHPPIPITDLADNIERLKANDGLKFSQEYESIDPGQQFTWENSNSEVNKPKNRYANVIAYDHSRVLLTSIDGVPGSDYINANYIDGYRKQNAYIATQGPLPETMGDFWRMVWEQRIATVVMMTRLEEKSRVKCDQYWPARGTETYGLIQVTLVDTVELATYTMRTFALHKSGSSEKRELRQFQFMAWPDHGVPEYPTPILAFLRRVKACNPLDAGPMVVHCSAGVGRTGCFIVIDAMLERMKHEKTVDIYGHVTCMRSQRNYMVQTEDQYVFIHEALLEAAMCGHTEVLARNLYAHIQKLGQVPPGESVTAMELEFKLLAGSKARASRFISANLPCNKFKNRLVNIMPYELTRVCLQPIRGVEGSDYINASFLDGYRQQKAYIATQGPLAESTEDFWRMLWEHNSTIIVMLTKLREMGREKCHQYWPAERSARYQYFVVDPMAEYNMPQYILREFKVTDARDGQSRTIRQFQFTDWPEQGVPKTGEGFIDFIGQVHKTKEQFGQDGPITVHCSAGVGRTGVFITLSIVLERMRYEGVVDMFQTVKTLRTQRPAMVQTEDQYQLCYRAALEYLGSFDHYAT</sequence>
<reference key="1">
    <citation type="journal article" date="1994" name="Biochem. J.">
        <title>Molecular cloning and expression of a unique receptor-like protein-tyrosine-phosphatase in the leucocyte-common-antigen-related phosphate family.</title>
        <authorList>
            <person name="Zhang W.-R."/>
            <person name="Hashimoto N."/>
            <person name="Ahmad F."/>
            <person name="Ding W."/>
            <person name="Goldstein B.J."/>
        </authorList>
    </citation>
    <scope>NUCLEOTIDE SEQUENCE [MRNA]</scope>
    <source>
        <strain>Sprague-Dawley</strain>
        <tissue>Liver</tissue>
    </source>
</reference>
<reference key="2">
    <citation type="journal article" date="1991" name="J. Biol. Chem.">
        <title>Cloning, bacterial expression, purification, and characterization of the cytoplasmic domain of rat LAR, a receptor-like protein tyrosine phosphatase.</title>
        <authorList>
            <person name="Pot D.A."/>
            <person name="Woodford T.A."/>
            <person name="Remboutsika E."/>
            <person name="Haun R.S."/>
            <person name="Dixon J.E."/>
        </authorList>
    </citation>
    <scope>NUCLEOTIDE SEQUENCE [MRNA] OF 1035-1898</scope>
    <scope>FUNCTION</scope>
    <source>
        <tissue>Hypothalamus</tissue>
    </source>
</reference>
<comment type="function">
    <text evidence="9">Possible cell adhesion receptor. It possesses an intrinsic protein tyrosine phosphatase activity (PTPase) and dephosphorylates EPHA2 regulating its activity.</text>
</comment>
<comment type="function">
    <text evidence="1">The first PTPase domain has enzymatic activity, while the second one seems to affect the substrate specificity of the first one.</text>
</comment>
<comment type="catalytic activity">
    <reaction evidence="7">
        <text>O-phospho-L-tyrosyl-[protein] + H2O = L-tyrosyl-[protein] + phosphate</text>
        <dbReference type="Rhea" id="RHEA:10684"/>
        <dbReference type="Rhea" id="RHEA-COMP:10136"/>
        <dbReference type="Rhea" id="RHEA-COMP:20101"/>
        <dbReference type="ChEBI" id="CHEBI:15377"/>
        <dbReference type="ChEBI" id="CHEBI:43474"/>
        <dbReference type="ChEBI" id="CHEBI:46858"/>
        <dbReference type="ChEBI" id="CHEBI:61978"/>
        <dbReference type="EC" id="3.1.3.48"/>
    </reaction>
</comment>
<comment type="subunit">
    <text evidence="1">Interacts with GRIP1. Interacts with PPFIA1, PPFIA2 and PPFIA3. Interacts with PTPRF.</text>
</comment>
<comment type="subcellular location">
    <subcellularLocation>
        <location>Membrane</location>
        <topology>Single-pass type I membrane protein</topology>
    </subcellularLocation>
</comment>
<comment type="similarity">
    <text evidence="10">Belongs to the protein-tyrosine phosphatase family. Receptor class 2A subfamily.</text>
</comment>
<proteinExistence type="evidence at transcript level"/>
<protein>
    <recommendedName>
        <fullName>Receptor-type tyrosine-protein phosphatase F</fullName>
        <ecNumber>3.1.3.48</ecNumber>
    </recommendedName>
    <alternativeName>
        <fullName>Leukocyte common antigen related</fullName>
        <shortName>LAR</shortName>
    </alternativeName>
</protein>
<evidence type="ECO:0000250" key="1"/>
<evidence type="ECO:0000250" key="2">
    <source>
        <dbReference type="UniProtKB" id="P10586"/>
    </source>
</evidence>
<evidence type="ECO:0000255" key="3"/>
<evidence type="ECO:0000255" key="4">
    <source>
        <dbReference type="PROSITE-ProRule" id="PRU00114"/>
    </source>
</evidence>
<evidence type="ECO:0000255" key="5">
    <source>
        <dbReference type="PROSITE-ProRule" id="PRU00160"/>
    </source>
</evidence>
<evidence type="ECO:0000255" key="6">
    <source>
        <dbReference type="PROSITE-ProRule" id="PRU00316"/>
    </source>
</evidence>
<evidence type="ECO:0000255" key="7">
    <source>
        <dbReference type="PROSITE-ProRule" id="PRU10044"/>
    </source>
</evidence>
<evidence type="ECO:0000256" key="8">
    <source>
        <dbReference type="SAM" id="MobiDB-lite"/>
    </source>
</evidence>
<evidence type="ECO:0000269" key="9">
    <source>
    </source>
</evidence>
<evidence type="ECO:0000305" key="10"/>